<reference key="1">
    <citation type="journal article" date="2000" name="Science">
        <title>The genome sequence of Drosophila melanogaster.</title>
        <authorList>
            <person name="Adams M.D."/>
            <person name="Celniker S.E."/>
            <person name="Holt R.A."/>
            <person name="Evans C.A."/>
            <person name="Gocayne J.D."/>
            <person name="Amanatides P.G."/>
            <person name="Scherer S.E."/>
            <person name="Li P.W."/>
            <person name="Hoskins R.A."/>
            <person name="Galle R.F."/>
            <person name="George R.A."/>
            <person name="Lewis S.E."/>
            <person name="Richards S."/>
            <person name="Ashburner M."/>
            <person name="Henderson S.N."/>
            <person name="Sutton G.G."/>
            <person name="Wortman J.R."/>
            <person name="Yandell M.D."/>
            <person name="Zhang Q."/>
            <person name="Chen L.X."/>
            <person name="Brandon R.C."/>
            <person name="Rogers Y.-H.C."/>
            <person name="Blazej R.G."/>
            <person name="Champe M."/>
            <person name="Pfeiffer B.D."/>
            <person name="Wan K.H."/>
            <person name="Doyle C."/>
            <person name="Baxter E.G."/>
            <person name="Helt G."/>
            <person name="Nelson C.R."/>
            <person name="Miklos G.L.G."/>
            <person name="Abril J.F."/>
            <person name="Agbayani A."/>
            <person name="An H.-J."/>
            <person name="Andrews-Pfannkoch C."/>
            <person name="Baldwin D."/>
            <person name="Ballew R.M."/>
            <person name="Basu A."/>
            <person name="Baxendale J."/>
            <person name="Bayraktaroglu L."/>
            <person name="Beasley E.M."/>
            <person name="Beeson K.Y."/>
            <person name="Benos P.V."/>
            <person name="Berman B.P."/>
            <person name="Bhandari D."/>
            <person name="Bolshakov S."/>
            <person name="Borkova D."/>
            <person name="Botchan M.R."/>
            <person name="Bouck J."/>
            <person name="Brokstein P."/>
            <person name="Brottier P."/>
            <person name="Burtis K.C."/>
            <person name="Busam D.A."/>
            <person name="Butler H."/>
            <person name="Cadieu E."/>
            <person name="Center A."/>
            <person name="Chandra I."/>
            <person name="Cherry J.M."/>
            <person name="Cawley S."/>
            <person name="Dahlke C."/>
            <person name="Davenport L.B."/>
            <person name="Davies P."/>
            <person name="de Pablos B."/>
            <person name="Delcher A."/>
            <person name="Deng Z."/>
            <person name="Mays A.D."/>
            <person name="Dew I."/>
            <person name="Dietz S.M."/>
            <person name="Dodson K."/>
            <person name="Doup L.E."/>
            <person name="Downes M."/>
            <person name="Dugan-Rocha S."/>
            <person name="Dunkov B.C."/>
            <person name="Dunn P."/>
            <person name="Durbin K.J."/>
            <person name="Evangelista C.C."/>
            <person name="Ferraz C."/>
            <person name="Ferriera S."/>
            <person name="Fleischmann W."/>
            <person name="Fosler C."/>
            <person name="Gabrielian A.E."/>
            <person name="Garg N.S."/>
            <person name="Gelbart W.M."/>
            <person name="Glasser K."/>
            <person name="Glodek A."/>
            <person name="Gong F."/>
            <person name="Gorrell J.H."/>
            <person name="Gu Z."/>
            <person name="Guan P."/>
            <person name="Harris M."/>
            <person name="Harris N.L."/>
            <person name="Harvey D.A."/>
            <person name="Heiman T.J."/>
            <person name="Hernandez J.R."/>
            <person name="Houck J."/>
            <person name="Hostin D."/>
            <person name="Houston K.A."/>
            <person name="Howland T.J."/>
            <person name="Wei M.-H."/>
            <person name="Ibegwam C."/>
            <person name="Jalali M."/>
            <person name="Kalush F."/>
            <person name="Karpen G.H."/>
            <person name="Ke Z."/>
            <person name="Kennison J.A."/>
            <person name="Ketchum K.A."/>
            <person name="Kimmel B.E."/>
            <person name="Kodira C.D."/>
            <person name="Kraft C.L."/>
            <person name="Kravitz S."/>
            <person name="Kulp D."/>
            <person name="Lai Z."/>
            <person name="Lasko P."/>
            <person name="Lei Y."/>
            <person name="Levitsky A.A."/>
            <person name="Li J.H."/>
            <person name="Li Z."/>
            <person name="Liang Y."/>
            <person name="Lin X."/>
            <person name="Liu X."/>
            <person name="Mattei B."/>
            <person name="McIntosh T.C."/>
            <person name="McLeod M.P."/>
            <person name="McPherson D."/>
            <person name="Merkulov G."/>
            <person name="Milshina N.V."/>
            <person name="Mobarry C."/>
            <person name="Morris J."/>
            <person name="Moshrefi A."/>
            <person name="Mount S.M."/>
            <person name="Moy M."/>
            <person name="Murphy B."/>
            <person name="Murphy L."/>
            <person name="Muzny D.M."/>
            <person name="Nelson D.L."/>
            <person name="Nelson D.R."/>
            <person name="Nelson K.A."/>
            <person name="Nixon K."/>
            <person name="Nusskern D.R."/>
            <person name="Pacleb J.M."/>
            <person name="Palazzolo M."/>
            <person name="Pittman G.S."/>
            <person name="Pan S."/>
            <person name="Pollard J."/>
            <person name="Puri V."/>
            <person name="Reese M.G."/>
            <person name="Reinert K."/>
            <person name="Remington K."/>
            <person name="Saunders R.D.C."/>
            <person name="Scheeler F."/>
            <person name="Shen H."/>
            <person name="Shue B.C."/>
            <person name="Siden-Kiamos I."/>
            <person name="Simpson M."/>
            <person name="Skupski M.P."/>
            <person name="Smith T.J."/>
            <person name="Spier E."/>
            <person name="Spradling A.C."/>
            <person name="Stapleton M."/>
            <person name="Strong R."/>
            <person name="Sun E."/>
            <person name="Svirskas R."/>
            <person name="Tector C."/>
            <person name="Turner R."/>
            <person name="Venter E."/>
            <person name="Wang A.H."/>
            <person name="Wang X."/>
            <person name="Wang Z.-Y."/>
            <person name="Wassarman D.A."/>
            <person name="Weinstock G.M."/>
            <person name="Weissenbach J."/>
            <person name="Williams S.M."/>
            <person name="Woodage T."/>
            <person name="Worley K.C."/>
            <person name="Wu D."/>
            <person name="Yang S."/>
            <person name="Yao Q.A."/>
            <person name="Ye J."/>
            <person name="Yeh R.-F."/>
            <person name="Zaveri J.S."/>
            <person name="Zhan M."/>
            <person name="Zhang G."/>
            <person name="Zhao Q."/>
            <person name="Zheng L."/>
            <person name="Zheng X.H."/>
            <person name="Zhong F.N."/>
            <person name="Zhong W."/>
            <person name="Zhou X."/>
            <person name="Zhu S.C."/>
            <person name="Zhu X."/>
            <person name="Smith H.O."/>
            <person name="Gibbs R.A."/>
            <person name="Myers E.W."/>
            <person name="Rubin G.M."/>
            <person name="Venter J.C."/>
        </authorList>
    </citation>
    <scope>NUCLEOTIDE SEQUENCE [LARGE SCALE GENOMIC DNA]</scope>
    <source>
        <strain>Berkeley</strain>
    </source>
</reference>
<reference key="2">
    <citation type="journal article" date="2002" name="Genome Biol.">
        <title>Annotation of the Drosophila melanogaster euchromatic genome: a systematic review.</title>
        <authorList>
            <person name="Misra S."/>
            <person name="Crosby M.A."/>
            <person name="Mungall C.J."/>
            <person name="Matthews B.B."/>
            <person name="Campbell K.S."/>
            <person name="Hradecky P."/>
            <person name="Huang Y."/>
            <person name="Kaminker J.S."/>
            <person name="Millburn G.H."/>
            <person name="Prochnik S.E."/>
            <person name="Smith C.D."/>
            <person name="Tupy J.L."/>
            <person name="Whitfield E.J."/>
            <person name="Bayraktaroglu L."/>
            <person name="Berman B.P."/>
            <person name="Bettencourt B.R."/>
            <person name="Celniker S.E."/>
            <person name="de Grey A.D.N.J."/>
            <person name="Drysdale R.A."/>
            <person name="Harris N.L."/>
            <person name="Richter J."/>
            <person name="Russo S."/>
            <person name="Schroeder A.J."/>
            <person name="Shu S.Q."/>
            <person name="Stapleton M."/>
            <person name="Yamada C."/>
            <person name="Ashburner M."/>
            <person name="Gelbart W.M."/>
            <person name="Rubin G.M."/>
            <person name="Lewis S.E."/>
        </authorList>
    </citation>
    <scope>GENOME REANNOTATION</scope>
    <source>
        <strain>Berkeley</strain>
    </source>
</reference>
<reference key="3">
    <citation type="journal article" date="2002" name="Genome Biol.">
        <title>A Drosophila full-length cDNA resource.</title>
        <authorList>
            <person name="Stapleton M."/>
            <person name="Carlson J.W."/>
            <person name="Brokstein P."/>
            <person name="Yu C."/>
            <person name="Champe M."/>
            <person name="George R.A."/>
            <person name="Guarin H."/>
            <person name="Kronmiller B."/>
            <person name="Pacleb J.M."/>
            <person name="Park S."/>
            <person name="Wan K.H."/>
            <person name="Rubin G.M."/>
            <person name="Celniker S.E."/>
        </authorList>
    </citation>
    <scope>NUCLEOTIDE SEQUENCE [LARGE SCALE MRNA]</scope>
    <source>
        <strain>Berkeley</strain>
        <tissue>Embryo</tissue>
    </source>
</reference>
<reference key="4">
    <citation type="journal article" date="2006" name="Nat. Cell Biol.">
        <title>The endocytic pathway mediates cell entry of dsRNA to induce RNAi silencing.</title>
        <authorList>
            <person name="Saleh M.-C."/>
            <person name="van Rij R.P."/>
            <person name="Hekele A."/>
            <person name="Gillis A."/>
            <person name="Foley E."/>
            <person name="O'Farrell P.H."/>
            <person name="Andino R."/>
        </authorList>
    </citation>
    <scope>FUNCTION</scope>
</reference>
<reference key="5">
    <citation type="journal article" date="2009" name="J. Cell Sci.">
        <title>TRAPPII is required for cleavage furrow ingression and localization of Rab11 in dividing male meiotic cells of Drosophila.</title>
        <authorList>
            <person name="Robinett C.C."/>
            <person name="Giansanti M.G."/>
            <person name="Gatti M."/>
            <person name="Fuller M.T."/>
        </authorList>
    </citation>
    <scope>IDENTIFICATION AS PROBABLE TRAPP COMPLEX COMPONENT</scope>
</reference>
<name>TPPC2_DROME</name>
<gene>
    <name evidence="5" type="primary">Trs20</name>
    <name evidence="5" type="synonym">l(3)72Dh</name>
    <name evidence="5" type="ORF">CG5161</name>
</gene>
<accession>Q9VUZ1</accession>
<accession>Q8SYG9</accession>
<organism>
    <name type="scientific">Drosophila melanogaster</name>
    <name type="common">Fruit fly</name>
    <dbReference type="NCBI Taxonomy" id="7227"/>
    <lineage>
        <taxon>Eukaryota</taxon>
        <taxon>Metazoa</taxon>
        <taxon>Ecdysozoa</taxon>
        <taxon>Arthropoda</taxon>
        <taxon>Hexapoda</taxon>
        <taxon>Insecta</taxon>
        <taxon>Pterygota</taxon>
        <taxon>Neoptera</taxon>
        <taxon>Endopterygota</taxon>
        <taxon>Diptera</taxon>
        <taxon>Brachycera</taxon>
        <taxon>Muscomorpha</taxon>
        <taxon>Ephydroidea</taxon>
        <taxon>Drosophilidae</taxon>
        <taxon>Drosophila</taxon>
        <taxon>Sophophora</taxon>
    </lineage>
</organism>
<comment type="function">
    <text evidence="2">May play a role in vesicular transport from endoplasmic reticulum to Golgi. Involved in dsRNA uptake.</text>
</comment>
<comment type="subunit">
    <text evidence="1 3">Part of the multisubunit TRAPP (transport protein particle) complex.</text>
</comment>
<comment type="interaction">
    <interactant intactId="EBI-157653">
        <id>Q9VUZ1</id>
    </interactant>
    <interactant intactId="EBI-195337">
        <id>Q7K2Q8</id>
        <label>Trs31</label>
    </interactant>
    <organismsDiffer>false</organismsDiffer>
    <experiments>5</experiments>
</comment>
<comment type="subcellular location">
    <subcellularLocation>
        <location evidence="1">Cytoplasm</location>
        <location evidence="1">Perinuclear region</location>
    </subcellularLocation>
    <subcellularLocation>
        <location evidence="1">Endoplasmic reticulum</location>
    </subcellularLocation>
    <subcellularLocation>
        <location evidence="1">Golgi apparatus</location>
    </subcellularLocation>
</comment>
<comment type="similarity">
    <text evidence="4">Belongs to the TRAPP small subunits family. Sedlin subfamily.</text>
</comment>
<keyword id="KW-0002">3D-structure</keyword>
<keyword id="KW-0963">Cytoplasm</keyword>
<keyword id="KW-0256">Endoplasmic reticulum</keyword>
<keyword id="KW-0931">ER-Golgi transport</keyword>
<keyword id="KW-0333">Golgi apparatus</keyword>
<keyword id="KW-1185">Reference proteome</keyword>
<keyword id="KW-0813">Transport</keyword>
<sequence length="139" mass="16646">MSTYYFVIVGQNDNPIYEKEFSTVNKELRKEDHRHLTQFIAHAALDLVDEHKWKTANMQLKSIDRFNQWFVSAFITASQIRFIIVHDNKNDEGIKNFFNEMYDTYIKNSMNAFYRINTPIKSPMFEKKSEIFGRKYLLS</sequence>
<proteinExistence type="evidence at protein level"/>
<feature type="chain" id="PRO_0000412460" description="Probable trafficking protein particle complex subunit 2">
    <location>
        <begin position="1"/>
        <end position="139"/>
    </location>
</feature>
<protein>
    <recommendedName>
        <fullName>Probable trafficking protein particle complex subunit 2</fullName>
    </recommendedName>
    <alternativeName>
        <fullName evidence="5">TRAPP subunit 20 ortholog</fullName>
    </alternativeName>
</protein>
<dbReference type="EMBL" id="AE014296">
    <property type="protein sequence ID" value="AAF49531.2"/>
    <property type="molecule type" value="Genomic_DNA"/>
</dbReference>
<dbReference type="EMBL" id="AY071561">
    <property type="protein sequence ID" value="AAL49183.1"/>
    <property type="molecule type" value="mRNA"/>
</dbReference>
<dbReference type="RefSeq" id="NP_648841.1">
    <property type="nucleotide sequence ID" value="NM_140584.3"/>
</dbReference>
<dbReference type="PDB" id="7B6D">
    <property type="method" value="EM"/>
    <property type="resolution" value="4.27 A"/>
    <property type="chains" value="E=1-139"/>
</dbReference>
<dbReference type="PDB" id="7B6R">
    <property type="method" value="EM"/>
    <property type="resolution" value="5.80 A"/>
    <property type="chains" value="G=1-139"/>
</dbReference>
<dbReference type="PDB" id="7B6X">
    <property type="method" value="EM"/>
    <property type="resolution" value="3.60 A"/>
    <property type="chains" value="E=1-139"/>
</dbReference>
<dbReference type="PDB" id="7B70">
    <property type="method" value="EM"/>
    <property type="resolution" value="4.00 A"/>
    <property type="chains" value="E=1-139"/>
</dbReference>
<dbReference type="PDBsum" id="7B6D"/>
<dbReference type="PDBsum" id="7B6R"/>
<dbReference type="PDBsum" id="7B6X"/>
<dbReference type="PDBsum" id="7B70"/>
<dbReference type="EMDB" id="EMD-12052"/>
<dbReference type="EMDB" id="EMD-12056"/>
<dbReference type="EMDB" id="EMD-12057"/>
<dbReference type="EMDB" id="EMD-12063"/>
<dbReference type="SMR" id="Q9VUZ1"/>
<dbReference type="BioGRID" id="65077">
    <property type="interactions" value="6"/>
</dbReference>
<dbReference type="ComplexPortal" id="CPX-2271">
    <property type="entry name" value="TRAPPII complex"/>
</dbReference>
<dbReference type="ComplexPortal" id="CPX-2279">
    <property type="entry name" value="TRAPPIII complex"/>
</dbReference>
<dbReference type="FunCoup" id="Q9VUZ1">
    <property type="interactions" value="757"/>
</dbReference>
<dbReference type="IntAct" id="Q9VUZ1">
    <property type="interactions" value="3"/>
</dbReference>
<dbReference type="STRING" id="7227.FBpp0075246"/>
<dbReference type="PaxDb" id="7227-FBpp0075246"/>
<dbReference type="DNASU" id="39769"/>
<dbReference type="EnsemblMetazoa" id="FBtr0075491">
    <property type="protein sequence ID" value="FBpp0075246"/>
    <property type="gene ID" value="FBgn0266724"/>
</dbReference>
<dbReference type="GeneID" id="39769"/>
<dbReference type="KEGG" id="dme:Dmel_CG5161"/>
<dbReference type="UCSC" id="CG5161-RA">
    <property type="organism name" value="d. melanogaster"/>
</dbReference>
<dbReference type="AGR" id="FB:FBgn0266724"/>
<dbReference type="CTD" id="39769"/>
<dbReference type="FlyBase" id="FBgn0266724">
    <property type="gene designation" value="Trs20"/>
</dbReference>
<dbReference type="VEuPathDB" id="VectorBase:FBgn0266724"/>
<dbReference type="eggNOG" id="KOG3487">
    <property type="taxonomic scope" value="Eukaryota"/>
</dbReference>
<dbReference type="GeneTree" id="ENSGT00510000047168"/>
<dbReference type="HOGENOM" id="CLU_085828_0_2_1"/>
<dbReference type="InParanoid" id="Q9VUZ1"/>
<dbReference type="OMA" id="RYMNQFI"/>
<dbReference type="OrthoDB" id="10252102at2759"/>
<dbReference type="PhylomeDB" id="Q9VUZ1"/>
<dbReference type="Reactome" id="R-DME-204005">
    <property type="pathway name" value="COPII-mediated vesicle transport"/>
</dbReference>
<dbReference type="Reactome" id="R-DME-8876198">
    <property type="pathway name" value="RAB GEFs exchange GTP for GDP on RABs"/>
</dbReference>
<dbReference type="BioGRID-ORCS" id="39769">
    <property type="hits" value="1 hit in 3 CRISPR screens"/>
</dbReference>
<dbReference type="GenomeRNAi" id="39769"/>
<dbReference type="PRO" id="PR:Q9VUZ1"/>
<dbReference type="Proteomes" id="UP000000803">
    <property type="component" value="Chromosome 3L"/>
</dbReference>
<dbReference type="Bgee" id="FBgn0266724">
    <property type="expression patterns" value="Expressed in saliva-secreting gland and 112 other cell types or tissues"/>
</dbReference>
<dbReference type="ExpressionAtlas" id="Q9VUZ1">
    <property type="expression patterns" value="baseline and differential"/>
</dbReference>
<dbReference type="GO" id="GO:0005737">
    <property type="term" value="C:cytoplasm"/>
    <property type="evidence" value="ECO:0000318"/>
    <property type="project" value="GO_Central"/>
</dbReference>
<dbReference type="GO" id="GO:0005783">
    <property type="term" value="C:endoplasmic reticulum"/>
    <property type="evidence" value="ECO:0007669"/>
    <property type="project" value="UniProtKB-SubCell"/>
</dbReference>
<dbReference type="GO" id="GO:0005634">
    <property type="term" value="C:nucleus"/>
    <property type="evidence" value="ECO:0000318"/>
    <property type="project" value="GO_Central"/>
</dbReference>
<dbReference type="GO" id="GO:0048471">
    <property type="term" value="C:perinuclear region of cytoplasm"/>
    <property type="evidence" value="ECO:0007669"/>
    <property type="project" value="UniProtKB-SubCell"/>
</dbReference>
<dbReference type="GO" id="GO:0030008">
    <property type="term" value="C:TRAPP complex"/>
    <property type="evidence" value="ECO:0000250"/>
    <property type="project" value="FlyBase"/>
</dbReference>
<dbReference type="GO" id="GO:1990071">
    <property type="term" value="C:TRAPPII protein complex"/>
    <property type="evidence" value="ECO:0000314"/>
    <property type="project" value="FlyBase"/>
</dbReference>
<dbReference type="GO" id="GO:1990072">
    <property type="term" value="C:TRAPPIII protein complex"/>
    <property type="evidence" value="ECO:0000314"/>
    <property type="project" value="FlyBase"/>
</dbReference>
<dbReference type="GO" id="GO:0006888">
    <property type="term" value="P:endoplasmic reticulum to Golgi vesicle-mediated transport"/>
    <property type="evidence" value="ECO:0000250"/>
    <property type="project" value="FlyBase"/>
</dbReference>
<dbReference type="GO" id="GO:0048193">
    <property type="term" value="P:Golgi vesicle transport"/>
    <property type="evidence" value="ECO:0000305"/>
    <property type="project" value="FlyBase"/>
</dbReference>
<dbReference type="GO" id="GO:0007283">
    <property type="term" value="P:spermatogenesis"/>
    <property type="evidence" value="ECO:0000315"/>
    <property type="project" value="FlyBase"/>
</dbReference>
<dbReference type="CDD" id="cd14825">
    <property type="entry name" value="TRAPPC2_sedlin"/>
    <property type="match status" value="1"/>
</dbReference>
<dbReference type="FunFam" id="3.30.450.70:FF:000001">
    <property type="entry name" value="Trafficking protein particle complex subunit 2"/>
    <property type="match status" value="1"/>
</dbReference>
<dbReference type="Gene3D" id="3.30.450.70">
    <property type="match status" value="1"/>
</dbReference>
<dbReference type="InterPro" id="IPR011012">
    <property type="entry name" value="Longin-like_dom_sf"/>
</dbReference>
<dbReference type="InterPro" id="IPR006722">
    <property type="entry name" value="Sedlin"/>
</dbReference>
<dbReference type="PANTHER" id="PTHR12403">
    <property type="entry name" value="TRAFFICKING PROTEIN PARTICLE COMPLEX SUBUNIT 2"/>
    <property type="match status" value="1"/>
</dbReference>
<dbReference type="Pfam" id="PF04628">
    <property type="entry name" value="Sedlin_N"/>
    <property type="match status" value="1"/>
</dbReference>
<dbReference type="SUPFAM" id="SSF64356">
    <property type="entry name" value="SNARE-like"/>
    <property type="match status" value="1"/>
</dbReference>
<evidence type="ECO:0000250" key="1">
    <source>
        <dbReference type="UniProtKB" id="P0DI81"/>
    </source>
</evidence>
<evidence type="ECO:0000269" key="2">
    <source>
    </source>
</evidence>
<evidence type="ECO:0000303" key="3">
    <source>
    </source>
</evidence>
<evidence type="ECO:0000305" key="4"/>
<evidence type="ECO:0000312" key="5">
    <source>
        <dbReference type="FlyBase" id="FBgn0266724"/>
    </source>
</evidence>